<dbReference type="EMBL" id="L33401">
    <property type="protein sequence ID" value="AAA28449.1"/>
    <property type="status" value="ALT_FRAME"/>
    <property type="molecule type" value="mRNA"/>
</dbReference>
<dbReference type="EMBL" id="AE014297">
    <property type="protein sequence ID" value="AAF56590.1"/>
    <property type="molecule type" value="Genomic_DNA"/>
</dbReference>
<dbReference type="EMBL" id="AY051581">
    <property type="protein sequence ID" value="AAK93005.1"/>
    <property type="molecule type" value="mRNA"/>
</dbReference>
<dbReference type="EMBL" id="BT003640">
    <property type="protein sequence ID" value="AAO39644.1"/>
    <property type="molecule type" value="mRNA"/>
</dbReference>
<dbReference type="PIR" id="A56066">
    <property type="entry name" value="A56066"/>
</dbReference>
<dbReference type="RefSeq" id="NP_001287543.1">
    <property type="nucleotide sequence ID" value="NM_001300614.1"/>
</dbReference>
<dbReference type="RefSeq" id="NP_524516.2">
    <property type="nucleotide sequence ID" value="NM_079792.3"/>
</dbReference>
<dbReference type="SMR" id="P41894"/>
<dbReference type="BioGRID" id="68086">
    <property type="interactions" value="26"/>
</dbReference>
<dbReference type="FunCoup" id="P41894">
    <property type="interactions" value="181"/>
</dbReference>
<dbReference type="IntAct" id="P41894">
    <property type="interactions" value="6"/>
</dbReference>
<dbReference type="STRING" id="7227.FBpp0308670"/>
<dbReference type="PaxDb" id="7227-FBpp0084381"/>
<dbReference type="DNASU" id="43190"/>
<dbReference type="EnsemblMetazoa" id="FBtr0085009">
    <property type="protein sequence ID" value="FBpp0084381"/>
    <property type="gene ID" value="FBgn0263118"/>
</dbReference>
<dbReference type="EnsemblMetazoa" id="FBtr0339598">
    <property type="protein sequence ID" value="FBpp0308670"/>
    <property type="gene ID" value="FBgn0263118"/>
</dbReference>
<dbReference type="GeneID" id="43190"/>
<dbReference type="KEGG" id="dme:Dmel_CG5441"/>
<dbReference type="UCSC" id="CG5441-RA">
    <property type="organism name" value="d. melanogaster"/>
</dbReference>
<dbReference type="AGR" id="FB:FBgn0288888"/>
<dbReference type="CTD" id="43190"/>
<dbReference type="FlyBase" id="FBgn0288888">
    <property type="gene designation" value="tx"/>
</dbReference>
<dbReference type="VEuPathDB" id="VectorBase:FBgn0263118"/>
<dbReference type="eggNOG" id="KOG4395">
    <property type="taxonomic scope" value="Eukaryota"/>
</dbReference>
<dbReference type="HOGENOM" id="CLU_720163_0_0_1"/>
<dbReference type="InParanoid" id="P41894"/>
<dbReference type="OMA" id="LRHCVPQ"/>
<dbReference type="OrthoDB" id="10063280at2759"/>
<dbReference type="PhylomeDB" id="P41894"/>
<dbReference type="BioGRID-ORCS" id="43190">
    <property type="hits" value="0 hits in 3 CRISPR screens"/>
</dbReference>
<dbReference type="GenomeRNAi" id="43190"/>
<dbReference type="PRO" id="PR:P41894"/>
<dbReference type="Proteomes" id="UP000000803">
    <property type="component" value="Chromosome 3R"/>
</dbReference>
<dbReference type="Bgee" id="FBgn0263118">
    <property type="expression patterns" value="Expressed in epithelial cell in male reproductive gland and 106 other cell types or tissues"/>
</dbReference>
<dbReference type="ExpressionAtlas" id="P41894">
    <property type="expression patterns" value="baseline and differential"/>
</dbReference>
<dbReference type="GO" id="GO:0005634">
    <property type="term" value="C:nucleus"/>
    <property type="evidence" value="ECO:0007005"/>
    <property type="project" value="FlyBase"/>
</dbReference>
<dbReference type="GO" id="GO:0043425">
    <property type="term" value="F:bHLH transcription factor binding"/>
    <property type="evidence" value="ECO:0000314"/>
    <property type="project" value="FlyBase"/>
</dbReference>
<dbReference type="GO" id="GO:0003677">
    <property type="term" value="F:DNA binding"/>
    <property type="evidence" value="ECO:0007669"/>
    <property type="project" value="UniProtKB-KW"/>
</dbReference>
<dbReference type="GO" id="GO:0000981">
    <property type="term" value="F:DNA-binding transcription factor activity, RNA polymerase II-specific"/>
    <property type="evidence" value="ECO:0000250"/>
    <property type="project" value="FlyBase"/>
</dbReference>
<dbReference type="GO" id="GO:0046983">
    <property type="term" value="F:protein dimerization activity"/>
    <property type="evidence" value="ECO:0007669"/>
    <property type="project" value="InterPro"/>
</dbReference>
<dbReference type="GO" id="GO:0033627">
    <property type="term" value="P:cell adhesion mediated by integrin"/>
    <property type="evidence" value="ECO:0000315"/>
    <property type="project" value="FlyBase"/>
</dbReference>
<dbReference type="GO" id="GO:0007474">
    <property type="term" value="P:imaginal disc-derived wing vein specification"/>
    <property type="evidence" value="ECO:0000315"/>
    <property type="project" value="FlyBase"/>
</dbReference>
<dbReference type="GO" id="GO:0007498">
    <property type="term" value="P:mesoderm development"/>
    <property type="evidence" value="ECO:0000270"/>
    <property type="project" value="FlyBase"/>
</dbReference>
<dbReference type="GO" id="GO:0016203">
    <property type="term" value="P:muscle attachment"/>
    <property type="evidence" value="ECO:0000304"/>
    <property type="project" value="FlyBase"/>
</dbReference>
<dbReference type="GO" id="GO:0006355">
    <property type="term" value="P:regulation of DNA-templated transcription"/>
    <property type="evidence" value="ECO:0000250"/>
    <property type="project" value="FlyBase"/>
</dbReference>
<dbReference type="GO" id="GO:0007525">
    <property type="term" value="P:somatic muscle development"/>
    <property type="evidence" value="ECO:0000304"/>
    <property type="project" value="FlyBase"/>
</dbReference>
<dbReference type="CDD" id="cd11431">
    <property type="entry name" value="bHLH_TS_taxi_Dei"/>
    <property type="match status" value="1"/>
</dbReference>
<dbReference type="Gene3D" id="4.10.280.10">
    <property type="entry name" value="Helix-loop-helix DNA-binding domain"/>
    <property type="match status" value="1"/>
</dbReference>
<dbReference type="InterPro" id="IPR011598">
    <property type="entry name" value="bHLH_dom"/>
</dbReference>
<dbReference type="InterPro" id="IPR050359">
    <property type="entry name" value="bHLH_transcription_factors"/>
</dbReference>
<dbReference type="InterPro" id="IPR036638">
    <property type="entry name" value="HLH_DNA-bd_sf"/>
</dbReference>
<dbReference type="PANTHER" id="PTHR19290">
    <property type="entry name" value="BASIC HELIX-LOOP-HELIX PROTEIN NEUROGENIN-RELATED"/>
    <property type="match status" value="1"/>
</dbReference>
<dbReference type="PANTHER" id="PTHR19290:SF147">
    <property type="entry name" value="HELIX-LOOP-HELIX PROTEIN DELILAH"/>
    <property type="match status" value="1"/>
</dbReference>
<dbReference type="Pfam" id="PF00010">
    <property type="entry name" value="HLH"/>
    <property type="match status" value="1"/>
</dbReference>
<dbReference type="SMART" id="SM00353">
    <property type="entry name" value="HLH"/>
    <property type="match status" value="1"/>
</dbReference>
<dbReference type="SUPFAM" id="SSF47459">
    <property type="entry name" value="HLH, helix-loop-helix DNA-binding domain"/>
    <property type="match status" value="1"/>
</dbReference>
<dbReference type="PROSITE" id="PS50888">
    <property type="entry name" value="BHLH"/>
    <property type="match status" value="1"/>
</dbReference>
<organism>
    <name type="scientific">Drosophila melanogaster</name>
    <name type="common">Fruit fly</name>
    <dbReference type="NCBI Taxonomy" id="7227"/>
    <lineage>
        <taxon>Eukaryota</taxon>
        <taxon>Metazoa</taxon>
        <taxon>Ecdysozoa</taxon>
        <taxon>Arthropoda</taxon>
        <taxon>Hexapoda</taxon>
        <taxon>Insecta</taxon>
        <taxon>Pterygota</taxon>
        <taxon>Neoptera</taxon>
        <taxon>Endopterygota</taxon>
        <taxon>Diptera</taxon>
        <taxon>Brachycera</taxon>
        <taxon>Muscomorpha</taxon>
        <taxon>Ephydroidea</taxon>
        <taxon>Drosophilidae</taxon>
        <taxon>Drosophila</taxon>
        <taxon>Sophophora</taxon>
    </lineage>
</organism>
<name>DEI_DROME</name>
<evidence type="ECO:0000255" key="1">
    <source>
        <dbReference type="PROSITE-ProRule" id="PRU00981"/>
    </source>
</evidence>
<evidence type="ECO:0000256" key="2">
    <source>
        <dbReference type="SAM" id="MobiDB-lite"/>
    </source>
</evidence>
<evidence type="ECO:0000269" key="3">
    <source>
    </source>
</evidence>
<evidence type="ECO:0000305" key="4"/>
<reference key="1">
    <citation type="journal article" date="1994" name="Mol. Cell. Biol.">
        <title>A novel basic helix-loop-helix protein is expressed in muscle attachment sites of the Drosophila epidermis.</title>
        <authorList>
            <person name="Armand P."/>
            <person name="Knapp A.C."/>
            <person name="Hirsch A.J."/>
            <person name="Wieschaus E.F."/>
            <person name="Cole M.D."/>
        </authorList>
    </citation>
    <scope>NUCLEOTIDE SEQUENCE [MRNA]</scope>
    <scope>FUNCTION</scope>
    <scope>SUBUNIT</scope>
    <scope>TISSUE SPECIFICITY</scope>
    <source>
        <tissue>Epidermis</tissue>
    </source>
</reference>
<reference key="2">
    <citation type="journal article" date="2000" name="Science">
        <title>The genome sequence of Drosophila melanogaster.</title>
        <authorList>
            <person name="Adams M.D."/>
            <person name="Celniker S.E."/>
            <person name="Holt R.A."/>
            <person name="Evans C.A."/>
            <person name="Gocayne J.D."/>
            <person name="Amanatides P.G."/>
            <person name="Scherer S.E."/>
            <person name="Li P.W."/>
            <person name="Hoskins R.A."/>
            <person name="Galle R.F."/>
            <person name="George R.A."/>
            <person name="Lewis S.E."/>
            <person name="Richards S."/>
            <person name="Ashburner M."/>
            <person name="Henderson S.N."/>
            <person name="Sutton G.G."/>
            <person name="Wortman J.R."/>
            <person name="Yandell M.D."/>
            <person name="Zhang Q."/>
            <person name="Chen L.X."/>
            <person name="Brandon R.C."/>
            <person name="Rogers Y.-H.C."/>
            <person name="Blazej R.G."/>
            <person name="Champe M."/>
            <person name="Pfeiffer B.D."/>
            <person name="Wan K.H."/>
            <person name="Doyle C."/>
            <person name="Baxter E.G."/>
            <person name="Helt G."/>
            <person name="Nelson C.R."/>
            <person name="Miklos G.L.G."/>
            <person name="Abril J.F."/>
            <person name="Agbayani A."/>
            <person name="An H.-J."/>
            <person name="Andrews-Pfannkoch C."/>
            <person name="Baldwin D."/>
            <person name="Ballew R.M."/>
            <person name="Basu A."/>
            <person name="Baxendale J."/>
            <person name="Bayraktaroglu L."/>
            <person name="Beasley E.M."/>
            <person name="Beeson K.Y."/>
            <person name="Benos P.V."/>
            <person name="Berman B.P."/>
            <person name="Bhandari D."/>
            <person name="Bolshakov S."/>
            <person name="Borkova D."/>
            <person name="Botchan M.R."/>
            <person name="Bouck J."/>
            <person name="Brokstein P."/>
            <person name="Brottier P."/>
            <person name="Burtis K.C."/>
            <person name="Busam D.A."/>
            <person name="Butler H."/>
            <person name="Cadieu E."/>
            <person name="Center A."/>
            <person name="Chandra I."/>
            <person name="Cherry J.M."/>
            <person name="Cawley S."/>
            <person name="Dahlke C."/>
            <person name="Davenport L.B."/>
            <person name="Davies P."/>
            <person name="de Pablos B."/>
            <person name="Delcher A."/>
            <person name="Deng Z."/>
            <person name="Mays A.D."/>
            <person name="Dew I."/>
            <person name="Dietz S.M."/>
            <person name="Dodson K."/>
            <person name="Doup L.E."/>
            <person name="Downes M."/>
            <person name="Dugan-Rocha S."/>
            <person name="Dunkov B.C."/>
            <person name="Dunn P."/>
            <person name="Durbin K.J."/>
            <person name="Evangelista C.C."/>
            <person name="Ferraz C."/>
            <person name="Ferriera S."/>
            <person name="Fleischmann W."/>
            <person name="Fosler C."/>
            <person name="Gabrielian A.E."/>
            <person name="Garg N.S."/>
            <person name="Gelbart W.M."/>
            <person name="Glasser K."/>
            <person name="Glodek A."/>
            <person name="Gong F."/>
            <person name="Gorrell J.H."/>
            <person name="Gu Z."/>
            <person name="Guan P."/>
            <person name="Harris M."/>
            <person name="Harris N.L."/>
            <person name="Harvey D.A."/>
            <person name="Heiman T.J."/>
            <person name="Hernandez J.R."/>
            <person name="Houck J."/>
            <person name="Hostin D."/>
            <person name="Houston K.A."/>
            <person name="Howland T.J."/>
            <person name="Wei M.-H."/>
            <person name="Ibegwam C."/>
            <person name="Jalali M."/>
            <person name="Kalush F."/>
            <person name="Karpen G.H."/>
            <person name="Ke Z."/>
            <person name="Kennison J.A."/>
            <person name="Ketchum K.A."/>
            <person name="Kimmel B.E."/>
            <person name="Kodira C.D."/>
            <person name="Kraft C.L."/>
            <person name="Kravitz S."/>
            <person name="Kulp D."/>
            <person name="Lai Z."/>
            <person name="Lasko P."/>
            <person name="Lei Y."/>
            <person name="Levitsky A.A."/>
            <person name="Li J.H."/>
            <person name="Li Z."/>
            <person name="Liang Y."/>
            <person name="Lin X."/>
            <person name="Liu X."/>
            <person name="Mattei B."/>
            <person name="McIntosh T.C."/>
            <person name="McLeod M.P."/>
            <person name="McPherson D."/>
            <person name="Merkulov G."/>
            <person name="Milshina N.V."/>
            <person name="Mobarry C."/>
            <person name="Morris J."/>
            <person name="Moshrefi A."/>
            <person name="Mount S.M."/>
            <person name="Moy M."/>
            <person name="Murphy B."/>
            <person name="Murphy L."/>
            <person name="Muzny D.M."/>
            <person name="Nelson D.L."/>
            <person name="Nelson D.R."/>
            <person name="Nelson K.A."/>
            <person name="Nixon K."/>
            <person name="Nusskern D.R."/>
            <person name="Pacleb J.M."/>
            <person name="Palazzolo M."/>
            <person name="Pittman G.S."/>
            <person name="Pan S."/>
            <person name="Pollard J."/>
            <person name="Puri V."/>
            <person name="Reese M.G."/>
            <person name="Reinert K."/>
            <person name="Remington K."/>
            <person name="Saunders R.D.C."/>
            <person name="Scheeler F."/>
            <person name="Shen H."/>
            <person name="Shue B.C."/>
            <person name="Siden-Kiamos I."/>
            <person name="Simpson M."/>
            <person name="Skupski M.P."/>
            <person name="Smith T.J."/>
            <person name="Spier E."/>
            <person name="Spradling A.C."/>
            <person name="Stapleton M."/>
            <person name="Strong R."/>
            <person name="Sun E."/>
            <person name="Svirskas R."/>
            <person name="Tector C."/>
            <person name="Turner R."/>
            <person name="Venter E."/>
            <person name="Wang A.H."/>
            <person name="Wang X."/>
            <person name="Wang Z.-Y."/>
            <person name="Wassarman D.A."/>
            <person name="Weinstock G.M."/>
            <person name="Weissenbach J."/>
            <person name="Williams S.M."/>
            <person name="Woodage T."/>
            <person name="Worley K.C."/>
            <person name="Wu D."/>
            <person name="Yang S."/>
            <person name="Yao Q.A."/>
            <person name="Ye J."/>
            <person name="Yeh R.-F."/>
            <person name="Zaveri J.S."/>
            <person name="Zhan M."/>
            <person name="Zhang G."/>
            <person name="Zhao Q."/>
            <person name="Zheng L."/>
            <person name="Zheng X.H."/>
            <person name="Zhong F.N."/>
            <person name="Zhong W."/>
            <person name="Zhou X."/>
            <person name="Zhu S.C."/>
            <person name="Zhu X."/>
            <person name="Smith H.O."/>
            <person name="Gibbs R.A."/>
            <person name="Myers E.W."/>
            <person name="Rubin G.M."/>
            <person name="Venter J.C."/>
        </authorList>
    </citation>
    <scope>NUCLEOTIDE SEQUENCE [LARGE SCALE GENOMIC DNA]</scope>
    <source>
        <strain>Berkeley</strain>
    </source>
</reference>
<reference key="3">
    <citation type="journal article" date="2002" name="Genome Biol.">
        <title>Annotation of the Drosophila melanogaster euchromatic genome: a systematic review.</title>
        <authorList>
            <person name="Misra S."/>
            <person name="Crosby M.A."/>
            <person name="Mungall C.J."/>
            <person name="Matthews B.B."/>
            <person name="Campbell K.S."/>
            <person name="Hradecky P."/>
            <person name="Huang Y."/>
            <person name="Kaminker J.S."/>
            <person name="Millburn G.H."/>
            <person name="Prochnik S.E."/>
            <person name="Smith C.D."/>
            <person name="Tupy J.L."/>
            <person name="Whitfield E.J."/>
            <person name="Bayraktaroglu L."/>
            <person name="Berman B.P."/>
            <person name="Bettencourt B.R."/>
            <person name="Celniker S.E."/>
            <person name="de Grey A.D.N.J."/>
            <person name="Drysdale R.A."/>
            <person name="Harris N.L."/>
            <person name="Richter J."/>
            <person name="Russo S."/>
            <person name="Schroeder A.J."/>
            <person name="Shu S.Q."/>
            <person name="Stapleton M."/>
            <person name="Yamada C."/>
            <person name="Ashburner M."/>
            <person name="Gelbart W.M."/>
            <person name="Rubin G.M."/>
            <person name="Lewis S.E."/>
        </authorList>
    </citation>
    <scope>GENOME REANNOTATION</scope>
    <source>
        <strain>Berkeley</strain>
    </source>
</reference>
<reference key="4">
    <citation type="journal article" date="2002" name="Genome Biol.">
        <title>A Drosophila full-length cDNA resource.</title>
        <authorList>
            <person name="Stapleton M."/>
            <person name="Carlson J.W."/>
            <person name="Brokstein P."/>
            <person name="Yu C."/>
            <person name="Champe M."/>
            <person name="George R.A."/>
            <person name="Guarin H."/>
            <person name="Kronmiller B."/>
            <person name="Pacleb J.M."/>
            <person name="Park S."/>
            <person name="Wan K.H."/>
            <person name="Rubin G.M."/>
            <person name="Celniker S.E."/>
        </authorList>
    </citation>
    <scope>NUCLEOTIDE SEQUENCE [LARGE SCALE MRNA]</scope>
    <source>
        <strain>Berkeley</strain>
        <tissue>Head</tissue>
    </source>
</reference>
<reference key="5">
    <citation type="submission" date="2003-02" db="EMBL/GenBank/DDBJ databases">
        <authorList>
            <person name="Stapleton M."/>
            <person name="Brokstein P."/>
            <person name="Hong L."/>
            <person name="Agbayani A."/>
            <person name="Carlson J.W."/>
            <person name="Champe M."/>
            <person name="Chavez C."/>
            <person name="Dorsett V."/>
            <person name="Dresnek D."/>
            <person name="Farfan D."/>
            <person name="Frise E."/>
            <person name="George R.A."/>
            <person name="Gonzalez M."/>
            <person name="Guarin H."/>
            <person name="Kronmiller B."/>
            <person name="Li P.W."/>
            <person name="Liao G."/>
            <person name="Miranda A."/>
            <person name="Mungall C.J."/>
            <person name="Nunoo J."/>
            <person name="Pacleb J.M."/>
            <person name="Paragas V."/>
            <person name="Park S."/>
            <person name="Patel S."/>
            <person name="Phouanenavong S."/>
            <person name="Wan K.H."/>
            <person name="Yu C."/>
            <person name="Lewis S.E."/>
            <person name="Rubin G.M."/>
            <person name="Celniker S.E."/>
        </authorList>
    </citation>
    <scope>NUCLEOTIDE SEQUENCE [LARGE SCALE MRNA]</scope>
    <source>
        <strain>Berkeley</strain>
        <tissue>Testis</tissue>
    </source>
</reference>
<comment type="function">
    <text evidence="3">Probably plays an important role in the differentiation of epidermal cells into the tendon cells that form the attachment sites for all muscles.</text>
</comment>
<comment type="subunit">
    <text evidence="3">Efficient DNA binding requires dimerization with another bHLH protein, possibly with da.</text>
</comment>
<comment type="subcellular location">
    <subcellularLocation>
        <location evidence="4">Nucleus</location>
    </subcellularLocation>
</comment>
<comment type="tissue specificity">
    <text evidence="3">Expressed almost exclusively in the attachments sites of the somatic muscles to tendon cells in the epidermis.</text>
</comment>
<comment type="sequence caution" evidence="4">
    <conflict type="frameshift">
        <sequence resource="EMBL-CDS" id="AAA28449"/>
    </conflict>
</comment>
<feature type="chain" id="PRO_0000127167" description="Helix-loop-helix protein delilah">
    <location>
        <begin position="1"/>
        <end position="384"/>
    </location>
</feature>
<feature type="domain" description="bHLH" evidence="1">
    <location>
        <begin position="94"/>
        <end position="153"/>
    </location>
</feature>
<feature type="region of interest" description="Disordered" evidence="2">
    <location>
        <begin position="1"/>
        <end position="101"/>
    </location>
</feature>
<feature type="region of interest" description="Disordered" evidence="2">
    <location>
        <begin position="187"/>
        <end position="227"/>
    </location>
</feature>
<feature type="compositionally biased region" description="Basic residues" evidence="2">
    <location>
        <begin position="75"/>
        <end position="86"/>
    </location>
</feature>
<feature type="compositionally biased region" description="Low complexity" evidence="2">
    <location>
        <begin position="209"/>
        <end position="224"/>
    </location>
</feature>
<feature type="sequence conflict" description="In Ref. 1; AAA28449." evidence="4" ref="1">
    <original>IGSPASS</original>
    <variation>DWIACLL</variation>
    <location>
        <begin position="244"/>
        <end position="250"/>
    </location>
</feature>
<feature type="sequence conflict" description="In Ref. 1." evidence="4" ref="1">
    <original>QP</original>
    <variation>HR</variation>
    <location>
        <begin position="355"/>
        <end position="356"/>
    </location>
</feature>
<keyword id="KW-0217">Developmental protein</keyword>
<keyword id="KW-0238">DNA-binding</keyword>
<keyword id="KW-0539">Nucleus</keyword>
<keyword id="KW-1185">Reference proteome</keyword>
<keyword id="KW-0804">Transcription</keyword>
<keyword id="KW-0805">Transcription regulation</keyword>
<sequence>MKSNTYELHNYADLNDMARATDSKDSRKRKTASARGEKYSLRQKRQKRGSNEDGESANLADFQLELDPIAEPASKSRKNAPTKSKTKAPPLSKYRRKTANARERTRMREINTAFETLRHCVPEAIKGEDAANTNEKLTKITTLRLAMKYITMLTDSIRDPSYESEFIGECLEESANREARVDLEANEEAEVELPVPVAKKPAKTKGSGKKSSAASKRQSQKQAKIVPQIPPISSGESCYATSSIGSPASSAYASLSSSSNSHSSSSSPGLELDSLVGLNGISALDSLLLDTSDGDSLSCLSPGYGSLLTGSGESLLPGCRGDLPMSGLEKSDVELSLRLLDQSSKDSFDFASDQQPSACISSFSALDGYPFDLLHSDFPDMFLT</sequence>
<protein>
    <recommendedName>
        <fullName>Helix-loop-helix protein delilah</fullName>
    </recommendedName>
    <alternativeName>
        <fullName>Protein taxi</fullName>
    </alternativeName>
</protein>
<gene>
    <name type="primary">tx</name>
    <name type="synonym">dei</name>
    <name type="ORF">CG5441</name>
</gene>
<proteinExistence type="evidence at protein level"/>
<accession>P41894</accession>
<accession>Q961H7</accession>
<accession>Q9VBF2</accession>